<comment type="function">
    <text evidence="5 6">Involved in the cross-linking of microtubules and microfilaments (PubMed:12584248, PubMed:24706950). Regulates microtubule dynamics and stability by interacting with microtubule plus-end tracking proteins, such as MAPRE1, to regulate microtubule growth along actin stress fibers (PubMed:24706950).</text>
</comment>
<comment type="subunit">
    <text evidence="6">Interacts with MAPRE1.</text>
</comment>
<comment type="interaction">
    <interactant intactId="EBI-10981762">
        <id>Q99501</id>
    </interactant>
    <interactant intactId="EBI-618655">
        <id>P81274</id>
        <label>GPSM2</label>
    </interactant>
    <organismsDiffer>false</organismsDiffer>
    <experiments>3</experiments>
</comment>
<comment type="subcellular location">
    <subcellularLocation>
        <location evidence="6">Cytoplasm</location>
        <location evidence="6">Cytoskeleton</location>
    </subcellularLocation>
    <subcellularLocation>
        <location evidence="6">Cytoplasm</location>
        <location evidence="6">Cytoskeleton</location>
        <location evidence="6">Stress fiber</location>
    </subcellularLocation>
    <text evidence="6">Colocalizes with the tips of microtubule plus ends.</text>
</comment>
<comment type="alternative products">
    <event type="alternative splicing"/>
    <isoform>
        <id>Q99501-1</id>
        <name>1</name>
        <name>Beta</name>
        <sequence type="displayed"/>
    </isoform>
    <isoform>
        <id>Q99501-2</id>
        <name>2</name>
        <name>Alpha</name>
        <sequence type="described" ref="VSP_015493"/>
    </isoform>
    <isoform>
        <id>Q99501-3</id>
        <name>3</name>
        <sequence type="described" ref="VSP_015494 VSP_015495"/>
    </isoform>
    <isoform>
        <id>Q99501-4</id>
        <name>4</name>
        <sequence type="described" ref="VSP_055754"/>
    </isoform>
</comment>
<comment type="similarity">
    <text evidence="8">Belongs to the GAS2 family.</text>
</comment>
<name>GA2L1_HUMAN</name>
<evidence type="ECO:0000250" key="1">
    <source>
        <dbReference type="UniProtKB" id="Q8JZP9"/>
    </source>
</evidence>
<evidence type="ECO:0000255" key="2">
    <source>
        <dbReference type="PROSITE-ProRule" id="PRU00044"/>
    </source>
</evidence>
<evidence type="ECO:0000255" key="3">
    <source>
        <dbReference type="PROSITE-ProRule" id="PRU00792"/>
    </source>
</evidence>
<evidence type="ECO:0000256" key="4">
    <source>
        <dbReference type="SAM" id="MobiDB-lite"/>
    </source>
</evidence>
<evidence type="ECO:0000269" key="5">
    <source>
    </source>
</evidence>
<evidence type="ECO:0000269" key="6">
    <source>
    </source>
</evidence>
<evidence type="ECO:0000303" key="7">
    <source>
    </source>
</evidence>
<evidence type="ECO:0000305" key="8"/>
<evidence type="ECO:0007744" key="9">
    <source>
    </source>
</evidence>
<evidence type="ECO:0007744" key="10">
    <source>
    </source>
</evidence>
<evidence type="ECO:0007744" key="11">
    <source>
    </source>
</evidence>
<evidence type="ECO:0007744" key="12">
    <source>
    </source>
</evidence>
<evidence type="ECO:0007744" key="13">
    <source>
    </source>
</evidence>
<evidence type="ECO:0007744" key="14">
    <source>
    </source>
</evidence>
<reference key="1">
    <citation type="journal article" date="1996" name="Genomics">
        <title>Identification of new members of the Gas2 and Ras families in the 22q12 chromosome region.</title>
        <authorList>
            <person name="Zucman-Rossi J."/>
            <person name="Legoix P."/>
            <person name="Thomas G."/>
        </authorList>
    </citation>
    <scope>NUCLEOTIDE SEQUENCE [GENOMIC DNA / MRNA] (ISOFORMS 2 AND 3)</scope>
</reference>
<reference key="2">
    <citation type="submission" date="2005-04" db="EMBL/GenBank/DDBJ databases">
        <authorList>
            <person name="Totoki Y."/>
            <person name="Toyoda A."/>
            <person name="Takeda T."/>
            <person name="Sakaki Y."/>
            <person name="Tanaka A."/>
            <person name="Yokoyama S."/>
        </authorList>
    </citation>
    <scope>NUCLEOTIDE SEQUENCE [LARGE SCALE MRNA] (ISOFORM 1)</scope>
    <source>
        <tissue>Brain</tissue>
    </source>
</reference>
<reference key="3">
    <citation type="journal article" date="1999" name="Nature">
        <title>The DNA sequence of human chromosome 22.</title>
        <authorList>
            <person name="Dunham I."/>
            <person name="Hunt A.R."/>
            <person name="Collins J.E."/>
            <person name="Bruskiewich R."/>
            <person name="Beare D.M."/>
            <person name="Clamp M."/>
            <person name="Smink L.J."/>
            <person name="Ainscough R."/>
            <person name="Almeida J.P."/>
            <person name="Babbage A.K."/>
            <person name="Bagguley C."/>
            <person name="Bailey J."/>
            <person name="Barlow K.F."/>
            <person name="Bates K.N."/>
            <person name="Beasley O.P."/>
            <person name="Bird C.P."/>
            <person name="Blakey S.E."/>
            <person name="Bridgeman A.M."/>
            <person name="Buck D."/>
            <person name="Burgess J."/>
            <person name="Burrill W.D."/>
            <person name="Burton J."/>
            <person name="Carder C."/>
            <person name="Carter N.P."/>
            <person name="Chen Y."/>
            <person name="Clark G."/>
            <person name="Clegg S.M."/>
            <person name="Cobley V.E."/>
            <person name="Cole C.G."/>
            <person name="Collier R.E."/>
            <person name="Connor R."/>
            <person name="Conroy D."/>
            <person name="Corby N.R."/>
            <person name="Coville G.J."/>
            <person name="Cox A.V."/>
            <person name="Davis J."/>
            <person name="Dawson E."/>
            <person name="Dhami P.D."/>
            <person name="Dockree C."/>
            <person name="Dodsworth S.J."/>
            <person name="Durbin R.M."/>
            <person name="Ellington A.G."/>
            <person name="Evans K.L."/>
            <person name="Fey J.M."/>
            <person name="Fleming K."/>
            <person name="French L."/>
            <person name="Garner A.A."/>
            <person name="Gilbert J.G.R."/>
            <person name="Goward M.E."/>
            <person name="Grafham D.V."/>
            <person name="Griffiths M.N.D."/>
            <person name="Hall C."/>
            <person name="Hall R.E."/>
            <person name="Hall-Tamlyn G."/>
            <person name="Heathcott R.W."/>
            <person name="Ho S."/>
            <person name="Holmes S."/>
            <person name="Hunt S.E."/>
            <person name="Jones M.C."/>
            <person name="Kershaw J."/>
            <person name="Kimberley A.M."/>
            <person name="King A."/>
            <person name="Laird G.K."/>
            <person name="Langford C.F."/>
            <person name="Leversha M.A."/>
            <person name="Lloyd C."/>
            <person name="Lloyd D.M."/>
            <person name="Martyn I.D."/>
            <person name="Mashreghi-Mohammadi M."/>
            <person name="Matthews L.H."/>
            <person name="Mccann O.T."/>
            <person name="Mcclay J."/>
            <person name="Mclaren S."/>
            <person name="McMurray A.A."/>
            <person name="Milne S.A."/>
            <person name="Mortimore B.J."/>
            <person name="Odell C.N."/>
            <person name="Pavitt R."/>
            <person name="Pearce A.V."/>
            <person name="Pearson D."/>
            <person name="Phillimore B.J.C.T."/>
            <person name="Phillips S.H."/>
            <person name="Plumb R.W."/>
            <person name="Ramsay H."/>
            <person name="Ramsey Y."/>
            <person name="Rogers L."/>
            <person name="Ross M.T."/>
            <person name="Scott C.E."/>
            <person name="Sehra H.K."/>
            <person name="Skuce C.D."/>
            <person name="Smalley S."/>
            <person name="Smith M.L."/>
            <person name="Soderlund C."/>
            <person name="Spragon L."/>
            <person name="Steward C.A."/>
            <person name="Sulston J.E."/>
            <person name="Swann R.M."/>
            <person name="Vaudin M."/>
            <person name="Wall M."/>
            <person name="Wallis J.M."/>
            <person name="Whiteley M.N."/>
            <person name="Willey D.L."/>
            <person name="Williams L."/>
            <person name="Williams S.A."/>
            <person name="Williamson H."/>
            <person name="Wilmer T.E."/>
            <person name="Wilming L."/>
            <person name="Wright C.L."/>
            <person name="Hubbard T."/>
            <person name="Bentley D.R."/>
            <person name="Beck S."/>
            <person name="Rogers J."/>
            <person name="Shimizu N."/>
            <person name="Minoshima S."/>
            <person name="Kawasaki K."/>
            <person name="Sasaki T."/>
            <person name="Asakawa S."/>
            <person name="Kudoh J."/>
            <person name="Shintani A."/>
            <person name="Shibuya K."/>
            <person name="Yoshizaki Y."/>
            <person name="Aoki N."/>
            <person name="Mitsuyama S."/>
            <person name="Roe B.A."/>
            <person name="Chen F."/>
            <person name="Chu L."/>
            <person name="Crabtree J."/>
            <person name="Deschamps S."/>
            <person name="Do A."/>
            <person name="Do T."/>
            <person name="Dorman A."/>
            <person name="Fang F."/>
            <person name="Fu Y."/>
            <person name="Hu P."/>
            <person name="Hua A."/>
            <person name="Kenton S."/>
            <person name="Lai H."/>
            <person name="Lao H.I."/>
            <person name="Lewis J."/>
            <person name="Lewis S."/>
            <person name="Lin S.-P."/>
            <person name="Loh P."/>
            <person name="Malaj E."/>
            <person name="Nguyen T."/>
            <person name="Pan H."/>
            <person name="Phan S."/>
            <person name="Qi S."/>
            <person name="Qian Y."/>
            <person name="Ray L."/>
            <person name="Ren Q."/>
            <person name="Shaull S."/>
            <person name="Sloan D."/>
            <person name="Song L."/>
            <person name="Wang Q."/>
            <person name="Wang Y."/>
            <person name="Wang Z."/>
            <person name="White J."/>
            <person name="Willingham D."/>
            <person name="Wu H."/>
            <person name="Yao Z."/>
            <person name="Zhan M."/>
            <person name="Zhang G."/>
            <person name="Chissoe S."/>
            <person name="Murray J."/>
            <person name="Miller N."/>
            <person name="Minx P."/>
            <person name="Fulton R."/>
            <person name="Johnson D."/>
            <person name="Bemis G."/>
            <person name="Bentley D."/>
            <person name="Bradshaw H."/>
            <person name="Bourne S."/>
            <person name="Cordes M."/>
            <person name="Du Z."/>
            <person name="Fulton L."/>
            <person name="Goela D."/>
            <person name="Graves T."/>
            <person name="Hawkins J."/>
            <person name="Hinds K."/>
            <person name="Kemp K."/>
            <person name="Latreille P."/>
            <person name="Layman D."/>
            <person name="Ozersky P."/>
            <person name="Rohlfing T."/>
            <person name="Scheet P."/>
            <person name="Walker C."/>
            <person name="Wamsley A."/>
            <person name="Wohldmann P."/>
            <person name="Pepin K."/>
            <person name="Nelson J."/>
            <person name="Korf I."/>
            <person name="Bedell J.A."/>
            <person name="Hillier L.W."/>
            <person name="Mardis E."/>
            <person name="Waterston R."/>
            <person name="Wilson R."/>
            <person name="Emanuel B.S."/>
            <person name="Shaikh T."/>
            <person name="Kurahashi H."/>
            <person name="Saitta S."/>
            <person name="Budarf M.L."/>
            <person name="McDermid H.E."/>
            <person name="Johnson A."/>
            <person name="Wong A.C.C."/>
            <person name="Morrow B.E."/>
            <person name="Edelmann L."/>
            <person name="Kim U.J."/>
            <person name="Shizuya H."/>
            <person name="Simon M.I."/>
            <person name="Dumanski J.P."/>
            <person name="Peyrard M."/>
            <person name="Kedra D."/>
            <person name="Seroussi E."/>
            <person name="Fransson I."/>
            <person name="Tapia I."/>
            <person name="Bruder C.E."/>
            <person name="O'Brien K.P."/>
            <person name="Wilkinson P."/>
            <person name="Bodenteich A."/>
            <person name="Hartman K."/>
            <person name="Hu X."/>
            <person name="Khan A.S."/>
            <person name="Lane L."/>
            <person name="Tilahun Y."/>
            <person name="Wright H."/>
        </authorList>
    </citation>
    <scope>NUCLEOTIDE SEQUENCE [LARGE SCALE GENOMIC DNA]</scope>
</reference>
<reference key="4">
    <citation type="journal article" date="2004" name="Genome Res.">
        <title>The status, quality, and expansion of the NIH full-length cDNA project: the Mammalian Gene Collection (MGC).</title>
        <authorList>
            <consortium name="The MGC Project Team"/>
        </authorList>
    </citation>
    <scope>NUCLEOTIDE SEQUENCE [LARGE SCALE MRNA] (ISOFORM 1)</scope>
    <source>
        <tissue>Brain</tissue>
        <tissue>Eye</tissue>
    </source>
</reference>
<reference key="5">
    <citation type="journal article" date="2003" name="J. Cell Sci.">
        <title>Protein products of human Gas2-related genes on chromosomes 17 and 22 (hGAR17 and hGAR22) associate with both microfilaments and microtubules.</title>
        <authorList>
            <person name="Goriounov D."/>
            <person name="Leung C.L."/>
            <person name="Liem R.K."/>
        </authorList>
    </citation>
    <scope>FUNCTION</scope>
    <scope>ALTERNATIVE SPLICING (ISOFORMS 1 AND 2)</scope>
</reference>
<reference key="6">
    <citation type="journal article" date="2008" name="J. Proteome Res.">
        <title>Combining protein-based IMAC, peptide-based IMAC, and MudPIT for efficient phosphoproteomic analysis.</title>
        <authorList>
            <person name="Cantin G.T."/>
            <person name="Yi W."/>
            <person name="Lu B."/>
            <person name="Park S.K."/>
            <person name="Xu T."/>
            <person name="Lee J.-D."/>
            <person name="Yates J.R. III"/>
        </authorList>
    </citation>
    <scope>IDENTIFICATION BY MASS SPECTROMETRY [LARGE SCALE ANALYSIS]</scope>
    <source>
        <tissue>Cervix carcinoma</tissue>
    </source>
</reference>
<reference key="7">
    <citation type="journal article" date="2008" name="J. Proteome Res.">
        <title>Phosphoproteome of resting human platelets.</title>
        <authorList>
            <person name="Zahedi R.P."/>
            <person name="Lewandrowski U."/>
            <person name="Wiesner J."/>
            <person name="Wortelkamp S."/>
            <person name="Moebius J."/>
            <person name="Schuetz C."/>
            <person name="Walter U."/>
            <person name="Gambaryan S."/>
            <person name="Sickmann A."/>
        </authorList>
    </citation>
    <scope>PHOSPHORYLATION [LARGE SCALE ANALYSIS] AT SER-306</scope>
    <scope>IDENTIFICATION BY MASS SPECTROMETRY [LARGE SCALE ANALYSIS]</scope>
    <source>
        <tissue>Platelet</tissue>
    </source>
</reference>
<reference key="8">
    <citation type="journal article" date="2008" name="Proc. Natl. Acad. Sci. U.S.A.">
        <title>A quantitative atlas of mitotic phosphorylation.</title>
        <authorList>
            <person name="Dephoure N."/>
            <person name="Zhou C."/>
            <person name="Villen J."/>
            <person name="Beausoleil S.A."/>
            <person name="Bakalarski C.E."/>
            <person name="Elledge S.J."/>
            <person name="Gygi S.P."/>
        </authorList>
    </citation>
    <scope>PHOSPHORYLATION [LARGE SCALE ANALYSIS] AT THR-193; SER-306; THR-391; SER-394; SER-492 AND THR-498</scope>
    <scope>IDENTIFICATION BY MASS SPECTROMETRY [LARGE SCALE ANALYSIS]</scope>
    <source>
        <tissue>Cervix carcinoma</tissue>
    </source>
</reference>
<reference key="9">
    <citation type="journal article" date="2009" name="Sci. Signal.">
        <title>Quantitative phosphoproteomic analysis of T cell receptor signaling reveals system-wide modulation of protein-protein interactions.</title>
        <authorList>
            <person name="Mayya V."/>
            <person name="Lundgren D.H."/>
            <person name="Hwang S.-I."/>
            <person name="Rezaul K."/>
            <person name="Wu L."/>
            <person name="Eng J.K."/>
            <person name="Rodionov V."/>
            <person name="Han D.K."/>
        </authorList>
    </citation>
    <scope>PHOSPHORYLATION [LARGE SCALE ANALYSIS] AT SER-352</scope>
    <scope>IDENTIFICATION BY MASS SPECTROMETRY [LARGE SCALE ANALYSIS]</scope>
    <source>
        <tissue>Leukemic T-cell</tissue>
    </source>
</reference>
<reference key="10">
    <citation type="journal article" date="2010" name="Sci. Signal.">
        <title>Quantitative phosphoproteomics reveals widespread full phosphorylation site occupancy during mitosis.</title>
        <authorList>
            <person name="Olsen J.V."/>
            <person name="Vermeulen M."/>
            <person name="Santamaria A."/>
            <person name="Kumar C."/>
            <person name="Miller M.L."/>
            <person name="Jensen L.J."/>
            <person name="Gnad F."/>
            <person name="Cox J."/>
            <person name="Jensen T.S."/>
            <person name="Nigg E.A."/>
            <person name="Brunak S."/>
            <person name="Mann M."/>
        </authorList>
    </citation>
    <scope>PHOSPHORYLATION [LARGE SCALE ANALYSIS] AT SER-492</scope>
    <scope>IDENTIFICATION BY MASS SPECTROMETRY [LARGE SCALE ANALYSIS]</scope>
    <source>
        <tissue>Cervix carcinoma</tissue>
    </source>
</reference>
<reference key="11">
    <citation type="journal article" date="2012" name="Mol. Cell. Proteomics">
        <title>Comparative large-scale characterisation of plant vs. mammal proteins reveals similar and idiosyncratic N-alpha acetylation features.</title>
        <authorList>
            <person name="Bienvenut W.V."/>
            <person name="Sumpton D."/>
            <person name="Martinez A."/>
            <person name="Lilla S."/>
            <person name="Espagne C."/>
            <person name="Meinnel T."/>
            <person name="Giglione C."/>
        </authorList>
    </citation>
    <scope>ACETYLATION [LARGE SCALE ANALYSIS] AT ALA-2</scope>
    <scope>CLEAVAGE OF INITIATOR METHIONINE [LARGE SCALE ANALYSIS]</scope>
    <scope>IDENTIFICATION BY MASS SPECTROMETRY [LARGE SCALE ANALYSIS]</scope>
</reference>
<reference key="12">
    <citation type="journal article" date="2013" name="J. Proteome Res.">
        <title>Toward a comprehensive characterization of a human cancer cell phosphoproteome.</title>
        <authorList>
            <person name="Zhou H."/>
            <person name="Di Palma S."/>
            <person name="Preisinger C."/>
            <person name="Peng M."/>
            <person name="Polat A.N."/>
            <person name="Heck A.J."/>
            <person name="Mohammed S."/>
        </authorList>
    </citation>
    <scope>PHOSPHORYLATION [LARGE SCALE ANALYSIS] AT SER-306; SER-316; THR-334; SER-352; SER-355; SER-394; SER-436; SER-438; SER-479; SER-486 AND SER-492</scope>
    <scope>IDENTIFICATION BY MASS SPECTROMETRY [LARGE SCALE ANALYSIS]</scope>
    <source>
        <tissue>Cervix carcinoma</tissue>
        <tissue>Erythroleukemia</tissue>
    </source>
</reference>
<reference key="13">
    <citation type="journal article" date="2014" name="J. Cell Sci.">
        <title>GAS2-like proteins mediate communication between microtubules and actin through interactions with end-binding proteins.</title>
        <authorList>
            <person name="Stroud M.J."/>
            <person name="Nazgiewicz A."/>
            <person name="McKenzie E.A."/>
            <person name="Wang Y."/>
            <person name="Kammerer R.A."/>
            <person name="Ballestrem C."/>
        </authorList>
    </citation>
    <scope>INTERACTION WITH MAPRE1</scope>
    <scope>SUBCELLULAR LOCATION</scope>
    <scope>MUTAGENESIS OF 647-ILE-PRO-648</scope>
</reference>
<accession>Q99501</accession>
<accession>B5MCR7</accession>
<accession>Q53EN7</accession>
<accession>Q92640</accession>
<accession>Q9BUY9</accession>
<dbReference type="EMBL" id="Y07848">
    <property type="protein sequence ID" value="CAA69176.1"/>
    <property type="molecule type" value="Genomic_DNA"/>
</dbReference>
<dbReference type="EMBL" id="Y07846">
    <property type="protein sequence ID" value="CAA69174.1"/>
    <property type="molecule type" value="mRNA"/>
</dbReference>
<dbReference type="EMBL" id="AK223602">
    <property type="protein sequence ID" value="BAD97322.1"/>
    <property type="molecule type" value="mRNA"/>
</dbReference>
<dbReference type="EMBL" id="AC002059">
    <property type="status" value="NOT_ANNOTATED_CDS"/>
    <property type="molecule type" value="Genomic_DNA"/>
</dbReference>
<dbReference type="EMBL" id="BC001782">
    <property type="protein sequence ID" value="AAH01782.1"/>
    <property type="molecule type" value="mRNA"/>
</dbReference>
<dbReference type="EMBL" id="BC007624">
    <property type="protein sequence ID" value="AAH07624.1"/>
    <property type="molecule type" value="mRNA"/>
</dbReference>
<dbReference type="EMBL" id="BC011047">
    <property type="protein sequence ID" value="AAH11047.1"/>
    <property type="molecule type" value="mRNA"/>
</dbReference>
<dbReference type="CCDS" id="CCDS63438.1">
    <molecule id="Q99501-4"/>
</dbReference>
<dbReference type="CCDS" id="CCDS74840.1">
    <molecule id="Q99501-1"/>
</dbReference>
<dbReference type="RefSeq" id="NP_001265659.1">
    <molecule id="Q99501-4"/>
    <property type="nucleotide sequence ID" value="NM_001278730.2"/>
</dbReference>
<dbReference type="RefSeq" id="NP_006469.2">
    <property type="nucleotide sequence ID" value="NM_006478.4"/>
</dbReference>
<dbReference type="RefSeq" id="NP_689422.1">
    <property type="nucleotide sequence ID" value="NM_152236.2"/>
</dbReference>
<dbReference type="RefSeq" id="XP_011528126.1">
    <property type="nucleotide sequence ID" value="XM_011529824.1"/>
</dbReference>
<dbReference type="RefSeq" id="XP_011528127.1">
    <property type="nucleotide sequence ID" value="XM_011529825.1"/>
</dbReference>
<dbReference type="RefSeq" id="XP_016884022.1">
    <property type="nucleotide sequence ID" value="XM_017028533.1"/>
</dbReference>
<dbReference type="SMR" id="Q99501"/>
<dbReference type="BioGRID" id="115878">
    <property type="interactions" value="48"/>
</dbReference>
<dbReference type="FunCoup" id="Q99501">
    <property type="interactions" value="174"/>
</dbReference>
<dbReference type="IntAct" id="Q99501">
    <property type="interactions" value="42"/>
</dbReference>
<dbReference type="STRING" id="9606.ENSP00000481012"/>
<dbReference type="GlyGen" id="Q99501">
    <property type="glycosylation" value="3 sites, 1 O-linked glycan (1 site)"/>
</dbReference>
<dbReference type="iPTMnet" id="Q99501"/>
<dbReference type="PhosphoSitePlus" id="Q99501"/>
<dbReference type="BioMuta" id="GAS2L1"/>
<dbReference type="DMDM" id="73915341"/>
<dbReference type="jPOST" id="Q99501"/>
<dbReference type="MassIVE" id="Q99501"/>
<dbReference type="PaxDb" id="9606-ENSP00000481012"/>
<dbReference type="PeptideAtlas" id="Q99501"/>
<dbReference type="ProteomicsDB" id="6091"/>
<dbReference type="ProteomicsDB" id="78300">
    <molecule id="Q99501-1"/>
</dbReference>
<dbReference type="ProteomicsDB" id="78301">
    <molecule id="Q99501-2"/>
</dbReference>
<dbReference type="ProteomicsDB" id="78302">
    <molecule id="Q99501-3"/>
</dbReference>
<dbReference type="Pumba" id="Q99501"/>
<dbReference type="Antibodypedia" id="10326">
    <property type="antibodies" value="201 antibodies from 24 providers"/>
</dbReference>
<dbReference type="DNASU" id="10634"/>
<dbReference type="Ensembl" id="ENST00000406549.7">
    <molecule id="Q99501-4"/>
    <property type="protein sequence ID" value="ENSP00000383995.3"/>
    <property type="gene ID" value="ENSG00000185340.16"/>
</dbReference>
<dbReference type="Ensembl" id="ENST00000610653.4">
    <molecule id="Q99501-2"/>
    <property type="protein sequence ID" value="ENSP00000484130.1"/>
    <property type="gene ID" value="ENSG00000185340.16"/>
</dbReference>
<dbReference type="GeneID" id="10634"/>
<dbReference type="KEGG" id="hsa:10634"/>
<dbReference type="UCSC" id="uc010gvm.3">
    <molecule id="Q99501-1"/>
    <property type="organism name" value="human"/>
</dbReference>
<dbReference type="AGR" id="HGNC:16955"/>
<dbReference type="CTD" id="10634"/>
<dbReference type="DisGeNET" id="10634"/>
<dbReference type="GeneCards" id="GAS2L1"/>
<dbReference type="HGNC" id="HGNC:16955">
    <property type="gene designation" value="GAS2L1"/>
</dbReference>
<dbReference type="HPA" id="ENSG00000185340">
    <property type="expression patterns" value="Low tissue specificity"/>
</dbReference>
<dbReference type="MIM" id="602128">
    <property type="type" value="gene"/>
</dbReference>
<dbReference type="neXtProt" id="NX_Q99501"/>
<dbReference type="OpenTargets" id="ENSG00000185340"/>
<dbReference type="PharmGKB" id="PA38195"/>
<dbReference type="VEuPathDB" id="HostDB:ENSG00000185340"/>
<dbReference type="eggNOG" id="KOG0516">
    <property type="taxonomic scope" value="Eukaryota"/>
</dbReference>
<dbReference type="GeneTree" id="ENSGT00940000154849"/>
<dbReference type="HOGENOM" id="CLU_015447_2_0_1"/>
<dbReference type="InParanoid" id="Q99501"/>
<dbReference type="OMA" id="TELGAWH"/>
<dbReference type="OrthoDB" id="206130at2759"/>
<dbReference type="PAN-GO" id="Q99501">
    <property type="GO annotations" value="10 GO annotations based on evolutionary models"/>
</dbReference>
<dbReference type="PhylomeDB" id="Q99501"/>
<dbReference type="TreeFam" id="TF323754"/>
<dbReference type="PathwayCommons" id="Q99501"/>
<dbReference type="SignaLink" id="Q99501"/>
<dbReference type="SIGNOR" id="Q99501"/>
<dbReference type="BioGRID-ORCS" id="10634">
    <property type="hits" value="5 hits in 1030 CRISPR screens"/>
</dbReference>
<dbReference type="ChiTaRS" id="GAS2L1">
    <property type="organism name" value="human"/>
</dbReference>
<dbReference type="GeneWiki" id="GAS2L1"/>
<dbReference type="GenomeRNAi" id="10634"/>
<dbReference type="Pharos" id="Q99501">
    <property type="development level" value="Tbio"/>
</dbReference>
<dbReference type="PRO" id="PR:Q99501"/>
<dbReference type="Proteomes" id="UP000005640">
    <property type="component" value="Chromosome 22"/>
</dbReference>
<dbReference type="RNAct" id="Q99501">
    <property type="molecule type" value="protein"/>
</dbReference>
<dbReference type="Bgee" id="ENSG00000185340">
    <property type="expression patterns" value="Expressed in cervix squamous epithelium and 196 other cell types or tissues"/>
</dbReference>
<dbReference type="ExpressionAtlas" id="Q99501">
    <property type="expression patterns" value="baseline and differential"/>
</dbReference>
<dbReference type="GO" id="GO:0005737">
    <property type="term" value="C:cytoplasm"/>
    <property type="evidence" value="ECO:0000314"/>
    <property type="project" value="UniProtKB"/>
</dbReference>
<dbReference type="GO" id="GO:0001725">
    <property type="term" value="C:stress fiber"/>
    <property type="evidence" value="ECO:0007669"/>
    <property type="project" value="UniProtKB-SubCell"/>
</dbReference>
<dbReference type="GO" id="GO:0051015">
    <property type="term" value="F:actin filament binding"/>
    <property type="evidence" value="ECO:0000318"/>
    <property type="project" value="GO_Central"/>
</dbReference>
<dbReference type="GO" id="GO:0008093">
    <property type="term" value="F:cytoskeletal anchor activity"/>
    <property type="evidence" value="ECO:0000314"/>
    <property type="project" value="UniProtKB"/>
</dbReference>
<dbReference type="GO" id="GO:0008017">
    <property type="term" value="F:microtubule binding"/>
    <property type="evidence" value="ECO:0000314"/>
    <property type="project" value="UniProtKB"/>
</dbReference>
<dbReference type="GO" id="GO:0051764">
    <property type="term" value="P:actin crosslink formation"/>
    <property type="evidence" value="ECO:0000318"/>
    <property type="project" value="GO_Central"/>
</dbReference>
<dbReference type="GO" id="GO:0009267">
    <property type="term" value="P:cellular response to starvation"/>
    <property type="evidence" value="ECO:0000250"/>
    <property type="project" value="UniProtKB"/>
</dbReference>
<dbReference type="GO" id="GO:0001578">
    <property type="term" value="P:microtubule bundle formation"/>
    <property type="evidence" value="ECO:0000315"/>
    <property type="project" value="UniProtKB"/>
</dbReference>
<dbReference type="GO" id="GO:0007026">
    <property type="term" value="P:negative regulation of microtubule depolymerization"/>
    <property type="evidence" value="ECO:0000315"/>
    <property type="project" value="UniProtKB"/>
</dbReference>
<dbReference type="GO" id="GO:1904825">
    <property type="term" value="P:protein localization to microtubule plus-end"/>
    <property type="evidence" value="ECO:0000314"/>
    <property type="project" value="UniProtKB"/>
</dbReference>
<dbReference type="GO" id="GO:0031110">
    <property type="term" value="P:regulation of microtubule polymerization or depolymerization"/>
    <property type="evidence" value="ECO:0000315"/>
    <property type="project" value="UniProtKB"/>
</dbReference>
<dbReference type="CDD" id="cd21268">
    <property type="entry name" value="CH_GAS2L1_2"/>
    <property type="match status" value="1"/>
</dbReference>
<dbReference type="FunFam" id="3.30.920.20:FF:000004">
    <property type="entry name" value="GAS2-like protein 1 isoform X1"/>
    <property type="match status" value="1"/>
</dbReference>
<dbReference type="FunFam" id="1.10.418.10:FF:000047">
    <property type="entry name" value="Growth arrest specific 2 like 1"/>
    <property type="match status" value="1"/>
</dbReference>
<dbReference type="Gene3D" id="1.10.418.10">
    <property type="entry name" value="Calponin-like domain"/>
    <property type="match status" value="1"/>
</dbReference>
<dbReference type="Gene3D" id="3.30.920.20">
    <property type="entry name" value="Gas2-like domain"/>
    <property type="match status" value="1"/>
</dbReference>
<dbReference type="InterPro" id="IPR001715">
    <property type="entry name" value="CH_dom"/>
</dbReference>
<dbReference type="InterPro" id="IPR036872">
    <property type="entry name" value="CH_dom_sf"/>
</dbReference>
<dbReference type="InterPro" id="IPR003108">
    <property type="entry name" value="GAR_dom"/>
</dbReference>
<dbReference type="InterPro" id="IPR036534">
    <property type="entry name" value="GAR_dom_sf"/>
</dbReference>
<dbReference type="PANTHER" id="PTHR46756:SF16">
    <property type="entry name" value="GAS2-LIKE PROTEIN 1"/>
    <property type="match status" value="1"/>
</dbReference>
<dbReference type="PANTHER" id="PTHR46756">
    <property type="entry name" value="TRANSGELIN"/>
    <property type="match status" value="1"/>
</dbReference>
<dbReference type="Pfam" id="PF00307">
    <property type="entry name" value="CH"/>
    <property type="match status" value="1"/>
</dbReference>
<dbReference type="Pfam" id="PF02187">
    <property type="entry name" value="GAS2"/>
    <property type="match status" value="1"/>
</dbReference>
<dbReference type="SMART" id="SM00033">
    <property type="entry name" value="CH"/>
    <property type="match status" value="1"/>
</dbReference>
<dbReference type="SMART" id="SM00243">
    <property type="entry name" value="GAS2"/>
    <property type="match status" value="1"/>
</dbReference>
<dbReference type="SUPFAM" id="SSF47576">
    <property type="entry name" value="Calponin-homology domain, CH-domain"/>
    <property type="match status" value="1"/>
</dbReference>
<dbReference type="SUPFAM" id="SSF143575">
    <property type="entry name" value="GAS2 domain-like"/>
    <property type="match status" value="1"/>
</dbReference>
<dbReference type="PROSITE" id="PS50021">
    <property type="entry name" value="CH"/>
    <property type="match status" value="1"/>
</dbReference>
<dbReference type="PROSITE" id="PS51460">
    <property type="entry name" value="GAR"/>
    <property type="match status" value="1"/>
</dbReference>
<keyword id="KW-0007">Acetylation</keyword>
<keyword id="KW-0025">Alternative splicing</keyword>
<keyword id="KW-0963">Cytoplasm</keyword>
<keyword id="KW-0206">Cytoskeleton</keyword>
<keyword id="KW-0488">Methylation</keyword>
<keyword id="KW-0597">Phosphoprotein</keyword>
<keyword id="KW-1267">Proteomics identification</keyword>
<keyword id="KW-1185">Reference proteome</keyword>
<protein>
    <recommendedName>
        <fullName>GAS2-like protein 1</fullName>
    </recommendedName>
    <alternativeName>
        <fullName>GAS2-related protein on chromosome 22</fullName>
    </alternativeName>
    <alternativeName>
        <fullName>Growth arrest-specific protein 2-like 1</fullName>
    </alternativeName>
</protein>
<proteinExistence type="evidence at protein level"/>
<organism>
    <name type="scientific">Homo sapiens</name>
    <name type="common">Human</name>
    <dbReference type="NCBI Taxonomy" id="9606"/>
    <lineage>
        <taxon>Eukaryota</taxon>
        <taxon>Metazoa</taxon>
        <taxon>Chordata</taxon>
        <taxon>Craniata</taxon>
        <taxon>Vertebrata</taxon>
        <taxon>Euteleostomi</taxon>
        <taxon>Mammalia</taxon>
        <taxon>Eutheria</taxon>
        <taxon>Euarchontoglires</taxon>
        <taxon>Primates</taxon>
        <taxon>Haplorrhini</taxon>
        <taxon>Catarrhini</taxon>
        <taxon>Hominidae</taxon>
        <taxon>Homo</taxon>
    </lineage>
</organism>
<gene>
    <name type="primary">GAS2L1</name>
    <name type="synonym">GAR22</name>
</gene>
<sequence length="681" mass="72717">MADPVAGIAGSAAKSVRPFRSSEAYVEAMKEDLAEWLNALYGLGLPGGGDGFLTGLATGTTLCQHANAVTEAARALAAARPARGVAFQAHSVVPGSFMARDNVATFIGWCRVELGVPEVLMFETEDLVLRKNEKSVVLCLLEVARRGARLGLLAPRLVQFEQEIERELRAAPPAPNAPAAGEDTTETAPAPGTPARGPRMTPSDLRNLDELVREILGRCTCPDQFPMIKVSEGKYRVGDSSLLIFVRVLRSHVMVRVGGGWDTLEHYLDKHDPCRCSSTAHRPPQPRVCTFSPQRVSPTTSPRPASPVPGSERRGSRPEMTPVSLRSTKEGPETPPRPRDQLPPHPRSRRYSGDSDSSASSAQSGPLGTRSDDTGTGPRRERPSRRLTTGTPASPRRPPALRSQSRDRLDRGRPRGAPGGRGAQLSVPSPARRARSQSREEQAVLLVRRDRDGQHSWVPRGRGSGGSGRSTPQTPRARSPAAPRLSRVSSPSPELGTTPASIFRTPLQLDPQQEQQLFRRLEEEFLANARALEAVASVTPTGPVPDPARAPDPPAPDSAYCSSSSSSSSLSVLGGKCGQPGDSGRTANGLPGPRSQALSSSSDEGSPCPGMGGPLDAPGSPLACTEPSRTWARGRMDTQPDRKPSRIPTPRGPRRPSGPAELGTWHALHSVTPRAEPDSWM</sequence>
<feature type="initiator methionine" description="Removed" evidence="13">
    <location>
        <position position="1"/>
    </location>
</feature>
<feature type="chain" id="PRO_0000190442" description="GAS2-like protein 1">
    <location>
        <begin position="2"/>
        <end position="681"/>
    </location>
</feature>
<feature type="domain" description="Calponin-homology (CH)" evidence="2">
    <location>
        <begin position="27"/>
        <end position="148"/>
    </location>
</feature>
<feature type="domain" description="GAR" evidence="3">
    <location>
        <begin position="203"/>
        <end position="275"/>
    </location>
</feature>
<feature type="region of interest" description="Disordered" evidence="4">
    <location>
        <begin position="168"/>
        <end position="204"/>
    </location>
</feature>
<feature type="region of interest" description="Disordered" evidence="4">
    <location>
        <begin position="278"/>
        <end position="509"/>
    </location>
</feature>
<feature type="region of interest" description="Disordered" evidence="4">
    <location>
        <begin position="536"/>
        <end position="681"/>
    </location>
</feature>
<feature type="compositionally biased region" description="Low complexity" evidence="4">
    <location>
        <begin position="186"/>
        <end position="199"/>
    </location>
</feature>
<feature type="compositionally biased region" description="Polar residues" evidence="4">
    <location>
        <begin position="291"/>
        <end position="303"/>
    </location>
</feature>
<feature type="compositionally biased region" description="Basic and acidic residues" evidence="4">
    <location>
        <begin position="327"/>
        <end position="342"/>
    </location>
</feature>
<feature type="compositionally biased region" description="Low complexity" evidence="4">
    <location>
        <begin position="354"/>
        <end position="365"/>
    </location>
</feature>
<feature type="compositionally biased region" description="Basic and acidic residues" evidence="4">
    <location>
        <begin position="370"/>
        <end position="381"/>
    </location>
</feature>
<feature type="compositionally biased region" description="Basic and acidic residues" evidence="4">
    <location>
        <begin position="404"/>
        <end position="413"/>
    </location>
</feature>
<feature type="compositionally biased region" description="Basic and acidic residues" evidence="4">
    <location>
        <begin position="437"/>
        <end position="454"/>
    </location>
</feature>
<feature type="compositionally biased region" description="Low complexity" evidence="4">
    <location>
        <begin position="475"/>
        <end position="493"/>
    </location>
</feature>
<feature type="compositionally biased region" description="Pro residues" evidence="4">
    <location>
        <begin position="542"/>
        <end position="556"/>
    </location>
</feature>
<feature type="compositionally biased region" description="Low complexity" evidence="4">
    <location>
        <begin position="557"/>
        <end position="571"/>
    </location>
</feature>
<feature type="compositionally biased region" description="Basic and acidic residues" evidence="4">
    <location>
        <begin position="634"/>
        <end position="644"/>
    </location>
</feature>
<feature type="modified residue" description="N-acetylalanine" evidence="13">
    <location>
        <position position="2"/>
    </location>
</feature>
<feature type="modified residue" description="Phosphothreonine" evidence="10">
    <location>
        <position position="193"/>
    </location>
</feature>
<feature type="modified residue" description="Phosphoserine" evidence="9 10 14">
    <location>
        <position position="306"/>
    </location>
</feature>
<feature type="modified residue" description="Phosphoserine" evidence="14">
    <location>
        <position position="316"/>
    </location>
</feature>
<feature type="modified residue" description="Phosphothreonine" evidence="14">
    <location>
        <position position="334"/>
    </location>
</feature>
<feature type="modified residue" description="Phosphoserine" evidence="11 14">
    <location>
        <position position="352"/>
    </location>
</feature>
<feature type="modified residue" description="Phosphoserine" evidence="14">
    <location>
        <position position="355"/>
    </location>
</feature>
<feature type="modified residue" description="Phosphothreonine" evidence="10">
    <location>
        <position position="391"/>
    </location>
</feature>
<feature type="modified residue" description="Phosphoserine" evidence="10 14">
    <location>
        <position position="394"/>
    </location>
</feature>
<feature type="modified residue" description="Phosphoserine" evidence="14">
    <location>
        <position position="436"/>
    </location>
</feature>
<feature type="modified residue" description="Phosphoserine" evidence="14">
    <location>
        <position position="438"/>
    </location>
</feature>
<feature type="modified residue" description="Phosphoserine" evidence="14">
    <location>
        <position position="479"/>
    </location>
</feature>
<feature type="modified residue" description="Phosphoserine" evidence="14">
    <location>
        <position position="486"/>
    </location>
</feature>
<feature type="modified residue" description="Omega-N-methylarginine" evidence="1">
    <location>
        <position position="487"/>
    </location>
</feature>
<feature type="modified residue" description="Phosphoserine" evidence="1">
    <location>
        <position position="490"/>
    </location>
</feature>
<feature type="modified residue" description="Phosphoserine" evidence="10 12 14">
    <location>
        <position position="492"/>
    </location>
</feature>
<feature type="modified residue" description="Phosphothreonine" evidence="10">
    <location>
        <position position="498"/>
    </location>
</feature>
<feature type="modified residue" description="Omega-N-methylarginine" evidence="1">
    <location>
        <position position="504"/>
    </location>
</feature>
<feature type="modified residue" description="Omega-N-methylarginine" evidence="1">
    <location>
        <position position="633"/>
    </location>
</feature>
<feature type="modified residue" description="Phosphoserine" evidence="1">
    <location>
        <position position="657"/>
    </location>
</feature>
<feature type="splice variant" id="VSP_015494" description="In isoform 3." evidence="7">
    <original>AHRPPQPRVCTFSPQRVSPTTSPRPASPVPGSERRGSRPEMTPVSLRSTK</original>
    <variation>GPGISCPPIPAPAATPGTVTPQPPPPRAAPLVPAVMTQALAPGGSDPAGG</variation>
    <location>
        <begin position="280"/>
        <end position="329"/>
    </location>
</feature>
<feature type="splice variant" id="VSP_015495" description="In isoform 3." evidence="7">
    <location>
        <begin position="330"/>
        <end position="681"/>
    </location>
</feature>
<feature type="splice variant" id="VSP_055754" description="In isoform 4." evidence="8">
    <location>
        <begin position="337"/>
        <end position="563"/>
    </location>
</feature>
<feature type="splice variant" id="VSP_015493" description="In isoform 2." evidence="7">
    <location>
        <begin position="338"/>
        <end position="681"/>
    </location>
</feature>
<feature type="sequence variant" id="VAR_059974" description="In dbSNP:rs34124440.">
    <original>S</original>
    <variation>G</variation>
    <location>
        <position position="490"/>
    </location>
</feature>
<feature type="mutagenesis site" description="Loss of microtubule-end localization and microtubule plus-end tracking. Decreases MAPRE1 binding." evidence="6">
    <original>IP</original>
    <variation>NN</variation>
    <location>
        <begin position="647"/>
        <end position="648"/>
    </location>
</feature>
<feature type="sequence conflict" description="In Ref. 2; BAD97322 and 4; AAH11047." evidence="8" ref="2 4">
    <original>V</original>
    <variation>A</variation>
    <location>
        <position position="544"/>
    </location>
</feature>
<feature type="sequence conflict" description="In Ref. 2; BAD97322." evidence="8" ref="2">
    <original>P</original>
    <variation>S</variation>
    <location>
        <position position="593"/>
    </location>
</feature>
<feature type="sequence conflict" description="In Ref. 2; BAD97322." evidence="8" ref="2">
    <original>H</original>
    <variation>R</variation>
    <location>
        <position position="666"/>
    </location>
</feature>